<accession>O82067</accession>
<organism>
    <name type="scientific">Solanum tuberosum</name>
    <name type="common">Potato</name>
    <dbReference type="NCBI Taxonomy" id="4113"/>
    <lineage>
        <taxon>Eukaryota</taxon>
        <taxon>Viridiplantae</taxon>
        <taxon>Streptophyta</taxon>
        <taxon>Embryophyta</taxon>
        <taxon>Tracheophyta</taxon>
        <taxon>Spermatophyta</taxon>
        <taxon>Magnoliopsida</taxon>
        <taxon>eudicotyledons</taxon>
        <taxon>Gunneridae</taxon>
        <taxon>Pentapetalae</taxon>
        <taxon>asterids</taxon>
        <taxon>lamiids</taxon>
        <taxon>Solanales</taxon>
        <taxon>Solanaceae</taxon>
        <taxon>Solanoideae</taxon>
        <taxon>Solaneae</taxon>
        <taxon>Solanum</taxon>
    </lineage>
</organism>
<protein>
    <recommendedName>
        <fullName>Mitochondrial import receptor subunit TOM7-1</fullName>
    </recommendedName>
    <alternativeName>
        <fullName>Translocase of outer membrane 7 kDa subunit 1</fullName>
    </alternativeName>
</protein>
<name>TOM7A_SOLTU</name>
<comment type="function">
    <text evidence="1">Seems to act as a modulator of the dynamics of the mitochondrial protein transport machinery. Seems to promote the dissociation of subunits of the outer membrane translocase (By similarity).</text>
</comment>
<comment type="subunit">
    <text>Forms part of the preprotein translocase complex of the outer mitochondrial membrane (TOM complex).</text>
</comment>
<comment type="subcellular location">
    <subcellularLocation>
        <location>Mitochondrion outer membrane</location>
        <topology>Single-pass membrane protein</topology>
    </subcellularLocation>
</comment>
<comment type="similarity">
    <text evidence="3">Belongs to the Tom7 family.</text>
</comment>
<proteinExistence type="inferred from homology"/>
<evidence type="ECO:0000250" key="1"/>
<evidence type="ECO:0000255" key="2"/>
<evidence type="ECO:0000305" key="3"/>
<reference key="1">
    <citation type="journal article" date="1998" name="J. Biol. Chem.">
        <title>Unique composition of the preprotein translocase of the outer mitochondrial membrane from plants.</title>
        <authorList>
            <person name="Jaensch L."/>
            <person name="Kruft V."/>
            <person name="Schmitz U.K."/>
            <person name="Braun H.-P."/>
        </authorList>
    </citation>
    <scope>NUCLEOTIDE SEQUENCE [MRNA]</scope>
    <source>
        <tissue>Tuber</tissue>
    </source>
</reference>
<gene>
    <name type="primary">TOM7-1</name>
</gene>
<dbReference type="EMBL" id="Y16228">
    <property type="protein sequence ID" value="CAA76125.1"/>
    <property type="molecule type" value="mRNA"/>
</dbReference>
<dbReference type="PIR" id="T07681">
    <property type="entry name" value="T07681"/>
</dbReference>
<dbReference type="SMR" id="O82067"/>
<dbReference type="FunCoup" id="O82067">
    <property type="interactions" value="211"/>
</dbReference>
<dbReference type="PaxDb" id="4113-PGSC0003DMT400054202"/>
<dbReference type="eggNOG" id="ENOG502S8KG">
    <property type="taxonomic scope" value="Eukaryota"/>
</dbReference>
<dbReference type="InParanoid" id="O82067"/>
<dbReference type="Proteomes" id="UP000011115">
    <property type="component" value="Unassembled WGS sequence"/>
</dbReference>
<dbReference type="ExpressionAtlas" id="O82067">
    <property type="expression patterns" value="baseline"/>
</dbReference>
<dbReference type="GO" id="GO:0005742">
    <property type="term" value="C:mitochondrial outer membrane translocase complex"/>
    <property type="evidence" value="ECO:0007669"/>
    <property type="project" value="InterPro"/>
</dbReference>
<dbReference type="GO" id="GO:0030150">
    <property type="term" value="P:protein import into mitochondrial matrix"/>
    <property type="evidence" value="ECO:0007669"/>
    <property type="project" value="InterPro"/>
</dbReference>
<dbReference type="InterPro" id="IPR012621">
    <property type="entry name" value="Tom7"/>
</dbReference>
<dbReference type="PANTHER" id="PTHR34944">
    <property type="entry name" value="MITOCHONDRIAL IMPORT RECEPTOR SUBUNIT TOM7"/>
    <property type="match status" value="1"/>
</dbReference>
<dbReference type="PANTHER" id="PTHR34944:SF2">
    <property type="entry name" value="MITOCHONDRIAL IMPORT RECEPTOR SUBUNIT TOM7"/>
    <property type="match status" value="1"/>
</dbReference>
<dbReference type="Pfam" id="PF08038">
    <property type="entry name" value="Tom7"/>
    <property type="match status" value="1"/>
</dbReference>
<keyword id="KW-0472">Membrane</keyword>
<keyword id="KW-0496">Mitochondrion</keyword>
<keyword id="KW-1000">Mitochondrion outer membrane</keyword>
<keyword id="KW-0653">Protein transport</keyword>
<keyword id="KW-1185">Reference proteome</keyword>
<keyword id="KW-0812">Transmembrane</keyword>
<keyword id="KW-1133">Transmembrane helix</keyword>
<keyword id="KW-0813">Transport</keyword>
<sequence>MLKPKGKNTKKAAAADEDDGAVAVVGKFVKEWGTWTAKKAKVITHYGFIPLVIIIGMNSEPKPSLSQLLSPV</sequence>
<feature type="initiator methionine" description="Removed" evidence="1">
    <location>
        <position position="1"/>
    </location>
</feature>
<feature type="chain" id="PRO_0000046764" description="Mitochondrial import receptor subunit TOM7-1">
    <location>
        <begin position="2"/>
        <end position="72"/>
    </location>
</feature>
<feature type="topological domain" description="Cytoplasmic" evidence="1">
    <location>
        <begin position="2"/>
        <end position="41"/>
    </location>
</feature>
<feature type="transmembrane region" description="Helical" evidence="2">
    <location>
        <begin position="42"/>
        <end position="59"/>
    </location>
</feature>
<feature type="topological domain" description="Mitochondrial intermembrane" evidence="1">
    <location>
        <begin position="60"/>
        <end position="72"/>
    </location>
</feature>